<comment type="catalytic activity">
    <reaction evidence="1">
        <text>CMP + ATP = CDP + ADP</text>
        <dbReference type="Rhea" id="RHEA:11600"/>
        <dbReference type="ChEBI" id="CHEBI:30616"/>
        <dbReference type="ChEBI" id="CHEBI:58069"/>
        <dbReference type="ChEBI" id="CHEBI:60377"/>
        <dbReference type="ChEBI" id="CHEBI:456216"/>
        <dbReference type="EC" id="2.7.4.25"/>
    </reaction>
</comment>
<comment type="catalytic activity">
    <reaction evidence="1">
        <text>dCMP + ATP = dCDP + ADP</text>
        <dbReference type="Rhea" id="RHEA:25094"/>
        <dbReference type="ChEBI" id="CHEBI:30616"/>
        <dbReference type="ChEBI" id="CHEBI:57566"/>
        <dbReference type="ChEBI" id="CHEBI:58593"/>
        <dbReference type="ChEBI" id="CHEBI:456216"/>
        <dbReference type="EC" id="2.7.4.25"/>
    </reaction>
</comment>
<comment type="subcellular location">
    <subcellularLocation>
        <location evidence="1">Cytoplasm</location>
    </subcellularLocation>
</comment>
<comment type="similarity">
    <text evidence="1">Belongs to the cytidylate kinase family. Type 1 subfamily.</text>
</comment>
<sequence>MGFVIAVDGPAASGKGTVAGRLAALYGYPLLDTGLLYRAVGVAILDGAGDLDDPIAAEAVARALDLSALDRAEVRTRAAGEAASRCAVHPGVRAALLDLQQTFAAREPGSVIDGRDIGTVIAPHAPAKLYVTARPEVRAERRWKQLVGQGEDVAFEDILADIHKRDARDGGRKDAPMTQAPDAVLLDTSEMTIEQAFDAARRIVEDARARHRL</sequence>
<accession>Q9A2H3</accession>
<organism>
    <name type="scientific">Caulobacter vibrioides (strain ATCC 19089 / CIP 103742 / CB 15)</name>
    <name type="common">Caulobacter crescentus</name>
    <dbReference type="NCBI Taxonomy" id="190650"/>
    <lineage>
        <taxon>Bacteria</taxon>
        <taxon>Pseudomonadati</taxon>
        <taxon>Pseudomonadota</taxon>
        <taxon>Alphaproteobacteria</taxon>
        <taxon>Caulobacterales</taxon>
        <taxon>Caulobacteraceae</taxon>
        <taxon>Caulobacter</taxon>
    </lineage>
</organism>
<gene>
    <name evidence="1" type="primary">cmk</name>
    <name type="ordered locus">CC_3588</name>
</gene>
<dbReference type="EC" id="2.7.4.25" evidence="1"/>
<dbReference type="EMBL" id="AE005673">
    <property type="protein sequence ID" value="AAK25550.1"/>
    <property type="molecule type" value="Genomic_DNA"/>
</dbReference>
<dbReference type="PIR" id="B87694">
    <property type="entry name" value="B87694"/>
</dbReference>
<dbReference type="RefSeq" id="NP_422382.1">
    <property type="nucleotide sequence ID" value="NC_002696.2"/>
</dbReference>
<dbReference type="RefSeq" id="WP_010921417.1">
    <property type="nucleotide sequence ID" value="NC_002696.2"/>
</dbReference>
<dbReference type="SMR" id="Q9A2H3"/>
<dbReference type="STRING" id="190650.CC_3588"/>
<dbReference type="EnsemblBacteria" id="AAK25550">
    <property type="protein sequence ID" value="AAK25550"/>
    <property type="gene ID" value="CC_3588"/>
</dbReference>
<dbReference type="KEGG" id="ccr:CC_3588"/>
<dbReference type="PATRIC" id="fig|190650.5.peg.3592"/>
<dbReference type="eggNOG" id="COG0283">
    <property type="taxonomic scope" value="Bacteria"/>
</dbReference>
<dbReference type="HOGENOM" id="CLU_079959_0_1_5"/>
<dbReference type="BioCyc" id="CAULO:CC3588-MONOMER"/>
<dbReference type="Proteomes" id="UP000001816">
    <property type="component" value="Chromosome"/>
</dbReference>
<dbReference type="GO" id="GO:0005737">
    <property type="term" value="C:cytoplasm"/>
    <property type="evidence" value="ECO:0007669"/>
    <property type="project" value="UniProtKB-SubCell"/>
</dbReference>
<dbReference type="GO" id="GO:0005524">
    <property type="term" value="F:ATP binding"/>
    <property type="evidence" value="ECO:0007669"/>
    <property type="project" value="UniProtKB-UniRule"/>
</dbReference>
<dbReference type="GO" id="GO:0036430">
    <property type="term" value="F:CMP kinase activity"/>
    <property type="evidence" value="ECO:0007669"/>
    <property type="project" value="RHEA"/>
</dbReference>
<dbReference type="GO" id="GO:0036431">
    <property type="term" value="F:dCMP kinase activity"/>
    <property type="evidence" value="ECO:0007669"/>
    <property type="project" value="RHEA"/>
</dbReference>
<dbReference type="GO" id="GO:0006220">
    <property type="term" value="P:pyrimidine nucleotide metabolic process"/>
    <property type="evidence" value="ECO:0007669"/>
    <property type="project" value="UniProtKB-UniRule"/>
</dbReference>
<dbReference type="CDD" id="cd02020">
    <property type="entry name" value="CMPK"/>
    <property type="match status" value="1"/>
</dbReference>
<dbReference type="Gene3D" id="3.40.50.300">
    <property type="entry name" value="P-loop containing nucleotide triphosphate hydrolases"/>
    <property type="match status" value="1"/>
</dbReference>
<dbReference type="HAMAP" id="MF_00238">
    <property type="entry name" value="Cytidyl_kinase_type1"/>
    <property type="match status" value="1"/>
</dbReference>
<dbReference type="InterPro" id="IPR003136">
    <property type="entry name" value="Cytidylate_kin"/>
</dbReference>
<dbReference type="InterPro" id="IPR011994">
    <property type="entry name" value="Cytidylate_kinase_dom"/>
</dbReference>
<dbReference type="InterPro" id="IPR027417">
    <property type="entry name" value="P-loop_NTPase"/>
</dbReference>
<dbReference type="NCBIfam" id="TIGR00017">
    <property type="entry name" value="cmk"/>
    <property type="match status" value="1"/>
</dbReference>
<dbReference type="Pfam" id="PF02224">
    <property type="entry name" value="Cytidylate_kin"/>
    <property type="match status" value="1"/>
</dbReference>
<dbReference type="SUPFAM" id="SSF52540">
    <property type="entry name" value="P-loop containing nucleoside triphosphate hydrolases"/>
    <property type="match status" value="1"/>
</dbReference>
<reference key="1">
    <citation type="journal article" date="2001" name="Proc. Natl. Acad. Sci. U.S.A.">
        <title>Complete genome sequence of Caulobacter crescentus.</title>
        <authorList>
            <person name="Nierman W.C."/>
            <person name="Feldblyum T.V."/>
            <person name="Laub M.T."/>
            <person name="Paulsen I.T."/>
            <person name="Nelson K.E."/>
            <person name="Eisen J.A."/>
            <person name="Heidelberg J.F."/>
            <person name="Alley M.R.K."/>
            <person name="Ohta N."/>
            <person name="Maddock J.R."/>
            <person name="Potocka I."/>
            <person name="Nelson W.C."/>
            <person name="Newton A."/>
            <person name="Stephens C."/>
            <person name="Phadke N.D."/>
            <person name="Ely B."/>
            <person name="DeBoy R.T."/>
            <person name="Dodson R.J."/>
            <person name="Durkin A.S."/>
            <person name="Gwinn M.L."/>
            <person name="Haft D.H."/>
            <person name="Kolonay J.F."/>
            <person name="Smit J."/>
            <person name="Craven M.B."/>
            <person name="Khouri H.M."/>
            <person name="Shetty J."/>
            <person name="Berry K.J."/>
            <person name="Utterback T.R."/>
            <person name="Tran K."/>
            <person name="Wolf A.M."/>
            <person name="Vamathevan J.J."/>
            <person name="Ermolaeva M.D."/>
            <person name="White O."/>
            <person name="Salzberg S.L."/>
            <person name="Venter J.C."/>
            <person name="Shapiro L."/>
            <person name="Fraser C.M."/>
        </authorList>
    </citation>
    <scope>NUCLEOTIDE SEQUENCE [LARGE SCALE GENOMIC DNA]</scope>
    <source>
        <strain>ATCC 19089 / CIP 103742 / CB 15</strain>
    </source>
</reference>
<feature type="chain" id="PRO_0000131897" description="Cytidylate kinase">
    <location>
        <begin position="1"/>
        <end position="213"/>
    </location>
</feature>
<feature type="binding site" evidence="1">
    <location>
        <begin position="9"/>
        <end position="17"/>
    </location>
    <ligand>
        <name>ATP</name>
        <dbReference type="ChEBI" id="CHEBI:30616"/>
    </ligand>
</feature>
<evidence type="ECO:0000255" key="1">
    <source>
        <dbReference type="HAMAP-Rule" id="MF_00238"/>
    </source>
</evidence>
<name>KCY_CAUVC</name>
<proteinExistence type="inferred from homology"/>
<protein>
    <recommendedName>
        <fullName evidence="1">Cytidylate kinase</fullName>
        <shortName evidence="1">CK</shortName>
        <ecNumber evidence="1">2.7.4.25</ecNumber>
    </recommendedName>
    <alternativeName>
        <fullName evidence="1">Cytidine monophosphate kinase</fullName>
        <shortName evidence="1">CMP kinase</shortName>
    </alternativeName>
</protein>
<keyword id="KW-0067">ATP-binding</keyword>
<keyword id="KW-0963">Cytoplasm</keyword>
<keyword id="KW-0418">Kinase</keyword>
<keyword id="KW-0547">Nucleotide-binding</keyword>
<keyword id="KW-1185">Reference proteome</keyword>
<keyword id="KW-0808">Transferase</keyword>